<sequence>ANPEVRNNLP</sequence>
<comment type="subcellular location">
    <subcellularLocation>
        <location evidence="1">Secreted</location>
        <location evidence="1">Cell wall</location>
    </subcellularLocation>
</comment>
<protein>
    <recommendedName>
        <fullName>23 kDa cell wall protein</fullName>
    </recommendedName>
</protein>
<accession>P80810</accession>
<feature type="chain" id="PRO_0000079672" description="23 kDa cell wall protein">
    <location>
        <begin position="1"/>
        <end position="10" status="greater than"/>
    </location>
</feature>
<feature type="non-terminal residue" evidence="2">
    <location>
        <position position="10"/>
    </location>
</feature>
<proteinExistence type="evidence at protein level"/>
<dbReference type="InParanoid" id="P80810"/>
<dbReference type="Proteomes" id="UP000004994">
    <property type="component" value="Unplaced"/>
</dbReference>
<dbReference type="GO" id="GO:0005576">
    <property type="term" value="C:extracellular region"/>
    <property type="evidence" value="ECO:0007669"/>
    <property type="project" value="UniProtKB-KW"/>
</dbReference>
<keyword id="KW-0134">Cell wall</keyword>
<keyword id="KW-0903">Direct protein sequencing</keyword>
<keyword id="KW-1185">Reference proteome</keyword>
<keyword id="KW-0964">Secreted</keyword>
<evidence type="ECO:0000269" key="1">
    <source>
    </source>
</evidence>
<evidence type="ECO:0000303" key="2">
    <source>
    </source>
</evidence>
<evidence type="ECO:0000305" key="3"/>
<reference evidence="3" key="1">
    <citation type="journal article" date="1997" name="J. Biol. Chem.">
        <title>Differential extraction and protein sequencing reveals major differences in patterns of primary cell wall proteins from plants.</title>
        <authorList>
            <person name="Robertson D."/>
            <person name="Mitchell G.P."/>
            <person name="Gilroy J.S."/>
            <person name="Gerrish C."/>
            <person name="Bolwell G.P."/>
            <person name="Slabas A.R."/>
        </authorList>
    </citation>
    <scope>PROTEIN SEQUENCE</scope>
    <scope>SUBCELLULAR LOCATION</scope>
</reference>
<organism>
    <name type="scientific">Solanum lycopersicum</name>
    <name type="common">Tomato</name>
    <name type="synonym">Lycopersicon esculentum</name>
    <dbReference type="NCBI Taxonomy" id="4081"/>
    <lineage>
        <taxon>Eukaryota</taxon>
        <taxon>Viridiplantae</taxon>
        <taxon>Streptophyta</taxon>
        <taxon>Embryophyta</taxon>
        <taxon>Tracheophyta</taxon>
        <taxon>Spermatophyta</taxon>
        <taxon>Magnoliopsida</taxon>
        <taxon>eudicotyledons</taxon>
        <taxon>Gunneridae</taxon>
        <taxon>Pentapetalae</taxon>
        <taxon>asterids</taxon>
        <taxon>lamiids</taxon>
        <taxon>Solanales</taxon>
        <taxon>Solanaceae</taxon>
        <taxon>Solanoideae</taxon>
        <taxon>Solaneae</taxon>
        <taxon>Solanum</taxon>
        <taxon>Solanum subgen. Lycopersicon</taxon>
    </lineage>
</organism>
<name>CWP14_SOLLC</name>